<name>RL2_BACAN</name>
<evidence type="ECO:0000255" key="1">
    <source>
        <dbReference type="HAMAP-Rule" id="MF_01320"/>
    </source>
</evidence>
<evidence type="ECO:0000256" key="2">
    <source>
        <dbReference type="SAM" id="MobiDB-lite"/>
    </source>
</evidence>
<evidence type="ECO:0000305" key="3"/>
<gene>
    <name evidence="1" type="primary">rplB</name>
    <name type="ordered locus">BA_0113</name>
    <name type="ordered locus">GBAA_0113</name>
    <name type="ordered locus">BAS0113</name>
</gene>
<proteinExistence type="inferred from homology"/>
<organism>
    <name type="scientific">Bacillus anthracis</name>
    <dbReference type="NCBI Taxonomy" id="1392"/>
    <lineage>
        <taxon>Bacteria</taxon>
        <taxon>Bacillati</taxon>
        <taxon>Bacillota</taxon>
        <taxon>Bacilli</taxon>
        <taxon>Bacillales</taxon>
        <taxon>Bacillaceae</taxon>
        <taxon>Bacillus</taxon>
        <taxon>Bacillus cereus group</taxon>
    </lineage>
</organism>
<protein>
    <recommendedName>
        <fullName evidence="1">Large ribosomal subunit protein uL2</fullName>
    </recommendedName>
    <alternativeName>
        <fullName evidence="3">50S ribosomal protein L2</fullName>
    </alternativeName>
</protein>
<reference key="1">
    <citation type="journal article" date="2003" name="Nature">
        <title>The genome sequence of Bacillus anthracis Ames and comparison to closely related bacteria.</title>
        <authorList>
            <person name="Read T.D."/>
            <person name="Peterson S.N."/>
            <person name="Tourasse N.J."/>
            <person name="Baillie L.W."/>
            <person name="Paulsen I.T."/>
            <person name="Nelson K.E."/>
            <person name="Tettelin H."/>
            <person name="Fouts D.E."/>
            <person name="Eisen J.A."/>
            <person name="Gill S.R."/>
            <person name="Holtzapple E.K."/>
            <person name="Okstad O.A."/>
            <person name="Helgason E."/>
            <person name="Rilstone J."/>
            <person name="Wu M."/>
            <person name="Kolonay J.F."/>
            <person name="Beanan M.J."/>
            <person name="Dodson R.J."/>
            <person name="Brinkac L.M."/>
            <person name="Gwinn M.L."/>
            <person name="DeBoy R.T."/>
            <person name="Madpu R."/>
            <person name="Daugherty S.C."/>
            <person name="Durkin A.S."/>
            <person name="Haft D.H."/>
            <person name="Nelson W.C."/>
            <person name="Peterson J.D."/>
            <person name="Pop M."/>
            <person name="Khouri H.M."/>
            <person name="Radune D."/>
            <person name="Benton J.L."/>
            <person name="Mahamoud Y."/>
            <person name="Jiang L."/>
            <person name="Hance I.R."/>
            <person name="Weidman J.F."/>
            <person name="Berry K.J."/>
            <person name="Plaut R.D."/>
            <person name="Wolf A.M."/>
            <person name="Watkins K.L."/>
            <person name="Nierman W.C."/>
            <person name="Hazen A."/>
            <person name="Cline R.T."/>
            <person name="Redmond C."/>
            <person name="Thwaite J.E."/>
            <person name="White O."/>
            <person name="Salzberg S.L."/>
            <person name="Thomason B."/>
            <person name="Friedlander A.M."/>
            <person name="Koehler T.M."/>
            <person name="Hanna P.C."/>
            <person name="Kolstoe A.-B."/>
            <person name="Fraser C.M."/>
        </authorList>
    </citation>
    <scope>NUCLEOTIDE SEQUENCE [LARGE SCALE GENOMIC DNA]</scope>
    <source>
        <strain>Ames / isolate Porton</strain>
    </source>
</reference>
<reference key="2">
    <citation type="journal article" date="2009" name="J. Bacteriol.">
        <title>The complete genome sequence of Bacillus anthracis Ames 'Ancestor'.</title>
        <authorList>
            <person name="Ravel J."/>
            <person name="Jiang L."/>
            <person name="Stanley S.T."/>
            <person name="Wilson M.R."/>
            <person name="Decker R.S."/>
            <person name="Read T.D."/>
            <person name="Worsham P."/>
            <person name="Keim P.S."/>
            <person name="Salzberg S.L."/>
            <person name="Fraser-Liggett C.M."/>
            <person name="Rasko D.A."/>
        </authorList>
    </citation>
    <scope>NUCLEOTIDE SEQUENCE [LARGE SCALE GENOMIC DNA]</scope>
    <source>
        <strain>Ames ancestor</strain>
    </source>
</reference>
<reference key="3">
    <citation type="submission" date="2004-01" db="EMBL/GenBank/DDBJ databases">
        <title>Complete genome sequence of Bacillus anthracis Sterne.</title>
        <authorList>
            <person name="Brettin T.S."/>
            <person name="Bruce D."/>
            <person name="Challacombe J.F."/>
            <person name="Gilna P."/>
            <person name="Han C."/>
            <person name="Hill K."/>
            <person name="Hitchcock P."/>
            <person name="Jackson P."/>
            <person name="Keim P."/>
            <person name="Longmire J."/>
            <person name="Lucas S."/>
            <person name="Okinaka R."/>
            <person name="Richardson P."/>
            <person name="Rubin E."/>
            <person name="Tice H."/>
        </authorList>
    </citation>
    <scope>NUCLEOTIDE SEQUENCE [LARGE SCALE GENOMIC DNA]</scope>
    <source>
        <strain>Sterne</strain>
    </source>
</reference>
<sequence>MGIKKYNPTTNGRRNMTTNDFAEITTDRPEKSLLAPLSKKAGRNNQGKITVRHQGGGHKRQYRIIDFKRNKDGIPGRVATIEYDPNRSANIALINYVDGEKRYILAPKNLEVGMEIMSGAEADIKIGNALPLINIPVGTVVHNIELKPGRGGQLVRSAGTSAQVLGKEGKYVLVRLTSGEVRLVLSACRATVGQVGNESHELIKIGKAGRSRWLGKRPTVRGSVMNPVDHPHGGGEGRSPIGRKSPMSPWGKPTLGFKTRKKNKASDKFIVRRRKK</sequence>
<accession>Q81VS7</accession>
<accession>Q6I4T1</accession>
<accession>Q6KYH7</accession>
<dbReference type="EMBL" id="AE016879">
    <property type="protein sequence ID" value="AAP24167.1"/>
    <property type="molecule type" value="Genomic_DNA"/>
</dbReference>
<dbReference type="EMBL" id="AE017334">
    <property type="protein sequence ID" value="AAT29193.1"/>
    <property type="molecule type" value="Genomic_DNA"/>
</dbReference>
<dbReference type="EMBL" id="AE017225">
    <property type="protein sequence ID" value="AAT52450.1"/>
    <property type="molecule type" value="Genomic_DNA"/>
</dbReference>
<dbReference type="RefSeq" id="NP_842681.1">
    <property type="nucleotide sequence ID" value="NC_003997.3"/>
</dbReference>
<dbReference type="RefSeq" id="WP_000511580.1">
    <property type="nucleotide sequence ID" value="NZ_WXXJ01000051.1"/>
</dbReference>
<dbReference type="RefSeq" id="YP_026399.1">
    <property type="nucleotide sequence ID" value="NC_005945.1"/>
</dbReference>
<dbReference type="SMR" id="Q81VS7"/>
<dbReference type="STRING" id="261594.GBAA_0113"/>
<dbReference type="DNASU" id="1087436"/>
<dbReference type="GeneID" id="93010940"/>
<dbReference type="KEGG" id="ban:BA_0113"/>
<dbReference type="KEGG" id="bar:GBAA_0113"/>
<dbReference type="KEGG" id="bat:BAS0113"/>
<dbReference type="PATRIC" id="fig|198094.11.peg.110"/>
<dbReference type="eggNOG" id="COG0090">
    <property type="taxonomic scope" value="Bacteria"/>
</dbReference>
<dbReference type="HOGENOM" id="CLU_036235_2_1_9"/>
<dbReference type="OMA" id="GGRHPCT"/>
<dbReference type="OrthoDB" id="9778722at2"/>
<dbReference type="Proteomes" id="UP000000427">
    <property type="component" value="Chromosome"/>
</dbReference>
<dbReference type="Proteomes" id="UP000000594">
    <property type="component" value="Chromosome"/>
</dbReference>
<dbReference type="GO" id="GO:0015934">
    <property type="term" value="C:large ribosomal subunit"/>
    <property type="evidence" value="ECO:0007669"/>
    <property type="project" value="InterPro"/>
</dbReference>
<dbReference type="GO" id="GO:0019843">
    <property type="term" value="F:rRNA binding"/>
    <property type="evidence" value="ECO:0007669"/>
    <property type="project" value="UniProtKB-UniRule"/>
</dbReference>
<dbReference type="GO" id="GO:0003735">
    <property type="term" value="F:structural constituent of ribosome"/>
    <property type="evidence" value="ECO:0007669"/>
    <property type="project" value="InterPro"/>
</dbReference>
<dbReference type="GO" id="GO:0016740">
    <property type="term" value="F:transferase activity"/>
    <property type="evidence" value="ECO:0007669"/>
    <property type="project" value="InterPro"/>
</dbReference>
<dbReference type="GO" id="GO:0002181">
    <property type="term" value="P:cytoplasmic translation"/>
    <property type="evidence" value="ECO:0007669"/>
    <property type="project" value="TreeGrafter"/>
</dbReference>
<dbReference type="FunFam" id="2.30.30.30:FF:000001">
    <property type="entry name" value="50S ribosomal protein L2"/>
    <property type="match status" value="1"/>
</dbReference>
<dbReference type="FunFam" id="2.40.50.140:FF:000003">
    <property type="entry name" value="50S ribosomal protein L2"/>
    <property type="match status" value="1"/>
</dbReference>
<dbReference type="FunFam" id="4.10.950.10:FF:000001">
    <property type="entry name" value="50S ribosomal protein L2"/>
    <property type="match status" value="1"/>
</dbReference>
<dbReference type="Gene3D" id="2.30.30.30">
    <property type="match status" value="1"/>
</dbReference>
<dbReference type="Gene3D" id="2.40.50.140">
    <property type="entry name" value="Nucleic acid-binding proteins"/>
    <property type="match status" value="1"/>
</dbReference>
<dbReference type="Gene3D" id="4.10.950.10">
    <property type="entry name" value="Ribosomal protein L2, domain 3"/>
    <property type="match status" value="1"/>
</dbReference>
<dbReference type="HAMAP" id="MF_01320_B">
    <property type="entry name" value="Ribosomal_uL2_B"/>
    <property type="match status" value="1"/>
</dbReference>
<dbReference type="InterPro" id="IPR012340">
    <property type="entry name" value="NA-bd_OB-fold"/>
</dbReference>
<dbReference type="InterPro" id="IPR014722">
    <property type="entry name" value="Rib_uL2_dom2"/>
</dbReference>
<dbReference type="InterPro" id="IPR002171">
    <property type="entry name" value="Ribosomal_uL2"/>
</dbReference>
<dbReference type="InterPro" id="IPR005880">
    <property type="entry name" value="Ribosomal_uL2_bac/org-type"/>
</dbReference>
<dbReference type="InterPro" id="IPR022669">
    <property type="entry name" value="Ribosomal_uL2_C"/>
</dbReference>
<dbReference type="InterPro" id="IPR022671">
    <property type="entry name" value="Ribosomal_uL2_CS"/>
</dbReference>
<dbReference type="InterPro" id="IPR014726">
    <property type="entry name" value="Ribosomal_uL2_dom3"/>
</dbReference>
<dbReference type="InterPro" id="IPR022666">
    <property type="entry name" value="Ribosomal_uL2_RNA-bd_dom"/>
</dbReference>
<dbReference type="InterPro" id="IPR008991">
    <property type="entry name" value="Translation_prot_SH3-like_sf"/>
</dbReference>
<dbReference type="NCBIfam" id="TIGR01171">
    <property type="entry name" value="rplB_bact"/>
    <property type="match status" value="1"/>
</dbReference>
<dbReference type="PANTHER" id="PTHR13691:SF5">
    <property type="entry name" value="LARGE RIBOSOMAL SUBUNIT PROTEIN UL2M"/>
    <property type="match status" value="1"/>
</dbReference>
<dbReference type="PANTHER" id="PTHR13691">
    <property type="entry name" value="RIBOSOMAL PROTEIN L2"/>
    <property type="match status" value="1"/>
</dbReference>
<dbReference type="Pfam" id="PF00181">
    <property type="entry name" value="Ribosomal_L2"/>
    <property type="match status" value="1"/>
</dbReference>
<dbReference type="Pfam" id="PF03947">
    <property type="entry name" value="Ribosomal_L2_C"/>
    <property type="match status" value="1"/>
</dbReference>
<dbReference type="PIRSF" id="PIRSF002158">
    <property type="entry name" value="Ribosomal_L2"/>
    <property type="match status" value="1"/>
</dbReference>
<dbReference type="SMART" id="SM01383">
    <property type="entry name" value="Ribosomal_L2"/>
    <property type="match status" value="1"/>
</dbReference>
<dbReference type="SMART" id="SM01382">
    <property type="entry name" value="Ribosomal_L2_C"/>
    <property type="match status" value="1"/>
</dbReference>
<dbReference type="SUPFAM" id="SSF50249">
    <property type="entry name" value="Nucleic acid-binding proteins"/>
    <property type="match status" value="1"/>
</dbReference>
<dbReference type="SUPFAM" id="SSF50104">
    <property type="entry name" value="Translation proteins SH3-like domain"/>
    <property type="match status" value="1"/>
</dbReference>
<dbReference type="PROSITE" id="PS00467">
    <property type="entry name" value="RIBOSOMAL_L2"/>
    <property type="match status" value="1"/>
</dbReference>
<comment type="function">
    <text evidence="1">One of the primary rRNA binding proteins. Required for association of the 30S and 50S subunits to form the 70S ribosome, for tRNA binding and peptide bond formation. It has been suggested to have peptidyltransferase activity; this is somewhat controversial. Makes several contacts with the 16S rRNA in the 70S ribosome.</text>
</comment>
<comment type="subunit">
    <text evidence="1">Part of the 50S ribosomal subunit. Forms a bridge to the 30S subunit in the 70S ribosome.</text>
</comment>
<comment type="similarity">
    <text evidence="1">Belongs to the universal ribosomal protein uL2 family.</text>
</comment>
<feature type="chain" id="PRO_0000129525" description="Large ribosomal subunit protein uL2">
    <location>
        <begin position="1"/>
        <end position="276"/>
    </location>
</feature>
<feature type="region of interest" description="Disordered" evidence="2">
    <location>
        <begin position="1"/>
        <end position="20"/>
    </location>
</feature>
<feature type="region of interest" description="Disordered" evidence="2">
    <location>
        <begin position="219"/>
        <end position="276"/>
    </location>
</feature>
<feature type="compositionally biased region" description="Polar residues" evidence="2">
    <location>
        <begin position="7"/>
        <end position="20"/>
    </location>
</feature>
<keyword id="KW-1185">Reference proteome</keyword>
<keyword id="KW-0687">Ribonucleoprotein</keyword>
<keyword id="KW-0689">Ribosomal protein</keyword>
<keyword id="KW-0694">RNA-binding</keyword>
<keyword id="KW-0699">rRNA-binding</keyword>